<protein>
    <recommendedName>
        <fullName evidence="1">Probable potassium transport system protein Kup</fullName>
    </recommendedName>
</protein>
<name>KUP_POLNA</name>
<organism>
    <name type="scientific">Polaromonas naphthalenivorans (strain CJ2)</name>
    <dbReference type="NCBI Taxonomy" id="365044"/>
    <lineage>
        <taxon>Bacteria</taxon>
        <taxon>Pseudomonadati</taxon>
        <taxon>Pseudomonadota</taxon>
        <taxon>Betaproteobacteria</taxon>
        <taxon>Burkholderiales</taxon>
        <taxon>Comamonadaceae</taxon>
        <taxon>Polaromonas</taxon>
    </lineage>
</organism>
<dbReference type="EMBL" id="CP000529">
    <property type="protein sequence ID" value="ABM39045.1"/>
    <property type="molecule type" value="Genomic_DNA"/>
</dbReference>
<dbReference type="RefSeq" id="WP_011803111.1">
    <property type="nucleotide sequence ID" value="NC_008781.1"/>
</dbReference>
<dbReference type="STRING" id="365044.Pnap_3749"/>
<dbReference type="KEGG" id="pna:Pnap_3749"/>
<dbReference type="eggNOG" id="COG3158">
    <property type="taxonomic scope" value="Bacteria"/>
</dbReference>
<dbReference type="HOGENOM" id="CLU_008142_4_2_4"/>
<dbReference type="OrthoDB" id="9805577at2"/>
<dbReference type="Proteomes" id="UP000000644">
    <property type="component" value="Chromosome"/>
</dbReference>
<dbReference type="GO" id="GO:0005886">
    <property type="term" value="C:plasma membrane"/>
    <property type="evidence" value="ECO:0007669"/>
    <property type="project" value="UniProtKB-SubCell"/>
</dbReference>
<dbReference type="GO" id="GO:0015079">
    <property type="term" value="F:potassium ion transmembrane transporter activity"/>
    <property type="evidence" value="ECO:0007669"/>
    <property type="project" value="UniProtKB-UniRule"/>
</dbReference>
<dbReference type="GO" id="GO:0015293">
    <property type="term" value="F:symporter activity"/>
    <property type="evidence" value="ECO:0007669"/>
    <property type="project" value="UniProtKB-UniRule"/>
</dbReference>
<dbReference type="HAMAP" id="MF_01522">
    <property type="entry name" value="Kup"/>
    <property type="match status" value="1"/>
</dbReference>
<dbReference type="InterPro" id="IPR003855">
    <property type="entry name" value="K+_transporter"/>
</dbReference>
<dbReference type="InterPro" id="IPR053952">
    <property type="entry name" value="K_trans_C"/>
</dbReference>
<dbReference type="InterPro" id="IPR053951">
    <property type="entry name" value="K_trans_N"/>
</dbReference>
<dbReference type="InterPro" id="IPR023051">
    <property type="entry name" value="Kup"/>
</dbReference>
<dbReference type="PANTHER" id="PTHR30540:SF79">
    <property type="entry name" value="LOW AFFINITY POTASSIUM TRANSPORT SYSTEM PROTEIN KUP"/>
    <property type="match status" value="1"/>
</dbReference>
<dbReference type="PANTHER" id="PTHR30540">
    <property type="entry name" value="OSMOTIC STRESS POTASSIUM TRANSPORTER"/>
    <property type="match status" value="1"/>
</dbReference>
<dbReference type="Pfam" id="PF02705">
    <property type="entry name" value="K_trans"/>
    <property type="match status" value="1"/>
</dbReference>
<dbReference type="Pfam" id="PF22776">
    <property type="entry name" value="K_trans_C"/>
    <property type="match status" value="1"/>
</dbReference>
<reference key="1">
    <citation type="journal article" date="2009" name="Environ. Microbiol.">
        <title>The genome of Polaromonas naphthalenivorans strain CJ2, isolated from coal tar-contaminated sediment, reveals physiological and metabolic versatility and evolution through extensive horizontal gene transfer.</title>
        <authorList>
            <person name="Yagi J.M."/>
            <person name="Sims D."/>
            <person name="Brettin T."/>
            <person name="Bruce D."/>
            <person name="Madsen E.L."/>
        </authorList>
    </citation>
    <scope>NUCLEOTIDE SEQUENCE [LARGE SCALE GENOMIC DNA]</scope>
    <source>
        <strain>CJ2</strain>
    </source>
</reference>
<comment type="function">
    <text evidence="1">Transport of potassium into the cell. Likely operates as a K(+):H(+) symporter.</text>
</comment>
<comment type="catalytic activity">
    <reaction evidence="1">
        <text>K(+)(in) + H(+)(in) = K(+)(out) + H(+)(out)</text>
        <dbReference type="Rhea" id="RHEA:28490"/>
        <dbReference type="ChEBI" id="CHEBI:15378"/>
        <dbReference type="ChEBI" id="CHEBI:29103"/>
    </reaction>
    <physiologicalReaction direction="right-to-left" evidence="1">
        <dbReference type="Rhea" id="RHEA:28492"/>
    </physiologicalReaction>
</comment>
<comment type="subcellular location">
    <subcellularLocation>
        <location evidence="1">Cell inner membrane</location>
        <topology evidence="1">Multi-pass membrane protein</topology>
    </subcellularLocation>
</comment>
<comment type="similarity">
    <text evidence="1">Belongs to the HAK/KUP transporter (TC 2.A.72) family.</text>
</comment>
<gene>
    <name evidence="1" type="primary">kup</name>
    <name type="ordered locus">Pnap_3749</name>
</gene>
<accession>A1VTR7</accession>
<proteinExistence type="inferred from homology"/>
<keyword id="KW-0997">Cell inner membrane</keyword>
<keyword id="KW-1003">Cell membrane</keyword>
<keyword id="KW-0406">Ion transport</keyword>
<keyword id="KW-0472">Membrane</keyword>
<keyword id="KW-0630">Potassium</keyword>
<keyword id="KW-0633">Potassium transport</keyword>
<keyword id="KW-1185">Reference proteome</keyword>
<keyword id="KW-0769">Symport</keyword>
<keyword id="KW-0812">Transmembrane</keyword>
<keyword id="KW-1133">Transmembrane helix</keyword>
<keyword id="KW-0813">Transport</keyword>
<feature type="chain" id="PRO_0000292619" description="Probable potassium transport system protein Kup">
    <location>
        <begin position="1"/>
        <end position="622"/>
    </location>
</feature>
<feature type="transmembrane region" description="Helical" evidence="1">
    <location>
        <begin position="8"/>
        <end position="28"/>
    </location>
</feature>
<feature type="transmembrane region" description="Helical" evidence="1">
    <location>
        <begin position="50"/>
        <end position="70"/>
    </location>
</feature>
<feature type="transmembrane region" description="Helical" evidence="1">
    <location>
        <begin position="101"/>
        <end position="121"/>
    </location>
</feature>
<feature type="transmembrane region" description="Helical" evidence="1">
    <location>
        <begin position="137"/>
        <end position="157"/>
    </location>
</feature>
<feature type="transmembrane region" description="Helical" evidence="1">
    <location>
        <begin position="165"/>
        <end position="185"/>
    </location>
</feature>
<feature type="transmembrane region" description="Helical" evidence="1">
    <location>
        <begin position="213"/>
        <end position="233"/>
    </location>
</feature>
<feature type="transmembrane region" description="Helical" evidence="1">
    <location>
        <begin position="247"/>
        <end position="267"/>
    </location>
</feature>
<feature type="transmembrane region" description="Helical" evidence="1">
    <location>
        <begin position="285"/>
        <end position="305"/>
    </location>
</feature>
<feature type="transmembrane region" description="Helical" evidence="1">
    <location>
        <begin position="337"/>
        <end position="357"/>
    </location>
</feature>
<feature type="transmembrane region" description="Helical" evidence="1">
    <location>
        <begin position="366"/>
        <end position="386"/>
    </location>
</feature>
<feature type="transmembrane region" description="Helical" evidence="1">
    <location>
        <begin position="393"/>
        <end position="413"/>
    </location>
</feature>
<feature type="transmembrane region" description="Helical" evidence="1">
    <location>
        <begin position="419"/>
        <end position="439"/>
    </location>
</feature>
<evidence type="ECO:0000255" key="1">
    <source>
        <dbReference type="HAMAP-Rule" id="MF_01522"/>
    </source>
</evidence>
<sequence>MTSQKSSLAVLTVGAIGVVYGDIGTSVLYAIKEVFGSGHVPFTPDNVYGILSIFFWTLTVIVSLKYVSLVLRADNNGEGGLIAMLALASTAVQDRPELRKVLLLVGIFGTSLFYGDGVITPAISVLSAVEGLEVISPTFTKAVIPTTLVILFGLFAMQKHGTAGIGKFFGPITIVWFAVLALLGVSQIVTHPEILFALSPHYALMFMWENPGITFIILGAVVLCVTGAEALYADLGHFGKKPIRLAWFSVVMPSLVLNYFGQGALLLSNPAAVKNPFYLMAPDWALIPLVVLATLATVIASQALITGAFSVTKQAIQMGYLPRLRILHTSVRDTGQIYMPFVNWGLFVTIVLAVVMFRSSSNLAAAYGIAVCTDMLITTILTFYVIRYGWKYPLALCIAATSVFFLVDFAFFASNLMKLFAGGWFPLVIGGAVFTLMITWKQGRQILNEKLRTDAIDLSSFLDAVFVSPPLRVEGTAVFMTAEPGIVPNAMLHNLKHNKVLHDQNLFVTVVNHEVPWIGMDKRLQVESLGHDCWQVNIHYGFKNDLDLPRALQQIKNRGCQLEPMTTSYFLSRDTVIPTIGSGMAAWREKLFAQMHHNASGAADFLNLPNNSVVELGSKIEI</sequence>